<proteinExistence type="inferred from homology"/>
<reference key="1">
    <citation type="submission" date="2007-10" db="EMBL/GenBank/DDBJ databases">
        <title>Complete sequence of Shewanella pealeana ATCC 700345.</title>
        <authorList>
            <consortium name="US DOE Joint Genome Institute"/>
            <person name="Copeland A."/>
            <person name="Lucas S."/>
            <person name="Lapidus A."/>
            <person name="Barry K."/>
            <person name="Glavina del Rio T."/>
            <person name="Dalin E."/>
            <person name="Tice H."/>
            <person name="Pitluck S."/>
            <person name="Chertkov O."/>
            <person name="Brettin T."/>
            <person name="Bruce D."/>
            <person name="Detter J.C."/>
            <person name="Han C."/>
            <person name="Schmutz J."/>
            <person name="Larimer F."/>
            <person name="Land M."/>
            <person name="Hauser L."/>
            <person name="Kyrpides N."/>
            <person name="Kim E."/>
            <person name="Zhao J.-S.Z."/>
            <person name="Manno D."/>
            <person name="Hawari J."/>
            <person name="Richardson P."/>
        </authorList>
    </citation>
    <scope>NUCLEOTIDE SEQUENCE [LARGE SCALE GENOMIC DNA]</scope>
    <source>
        <strain>ATCC 700345 / ANG-SQ1</strain>
    </source>
</reference>
<sequence>MTTVSMRDMLQAGVHFGHQTRYWNPKMKPFIFGARNGVHIINLEHTVPMFNEALAFISNVASKKGKVLFVGTKRAASEAIKEAAVSCDQYYVDHRWLGGMLTNWKTVRQSIKRLKDLESQSVDGTFDKLTKKEALMRTRELDKLEKSLGGIKNMAGLPDVIFVIGADHEHIAIKEANNLGIPVVAVVDTNSSPDGINYIIPGNDDAMRSIRLYTQSVAAAAKAGRGQDLAVQAEQDGFVEAE</sequence>
<keyword id="KW-1185">Reference proteome</keyword>
<keyword id="KW-0687">Ribonucleoprotein</keyword>
<keyword id="KW-0689">Ribosomal protein</keyword>
<name>RS2_SHEPA</name>
<evidence type="ECO:0000255" key="1">
    <source>
        <dbReference type="HAMAP-Rule" id="MF_00291"/>
    </source>
</evidence>
<evidence type="ECO:0000305" key="2"/>
<comment type="similarity">
    <text evidence="1">Belongs to the universal ribosomal protein uS2 family.</text>
</comment>
<dbReference type="EMBL" id="CP000851">
    <property type="protein sequence ID" value="ABV88203.1"/>
    <property type="molecule type" value="Genomic_DNA"/>
</dbReference>
<dbReference type="RefSeq" id="WP_012156108.1">
    <property type="nucleotide sequence ID" value="NC_009901.1"/>
</dbReference>
<dbReference type="SMR" id="A8H6L6"/>
<dbReference type="STRING" id="398579.Spea_2885"/>
<dbReference type="KEGG" id="spl:Spea_2885"/>
<dbReference type="eggNOG" id="COG0052">
    <property type="taxonomic scope" value="Bacteria"/>
</dbReference>
<dbReference type="HOGENOM" id="CLU_040318_1_2_6"/>
<dbReference type="OrthoDB" id="9808036at2"/>
<dbReference type="Proteomes" id="UP000002608">
    <property type="component" value="Chromosome"/>
</dbReference>
<dbReference type="GO" id="GO:0022627">
    <property type="term" value="C:cytosolic small ribosomal subunit"/>
    <property type="evidence" value="ECO:0007669"/>
    <property type="project" value="TreeGrafter"/>
</dbReference>
<dbReference type="GO" id="GO:0003735">
    <property type="term" value="F:structural constituent of ribosome"/>
    <property type="evidence" value="ECO:0007669"/>
    <property type="project" value="InterPro"/>
</dbReference>
<dbReference type="GO" id="GO:0006412">
    <property type="term" value="P:translation"/>
    <property type="evidence" value="ECO:0007669"/>
    <property type="project" value="UniProtKB-UniRule"/>
</dbReference>
<dbReference type="CDD" id="cd01425">
    <property type="entry name" value="RPS2"/>
    <property type="match status" value="1"/>
</dbReference>
<dbReference type="FunFam" id="1.10.287.610:FF:000001">
    <property type="entry name" value="30S ribosomal protein S2"/>
    <property type="match status" value="1"/>
</dbReference>
<dbReference type="Gene3D" id="3.40.50.10490">
    <property type="entry name" value="Glucose-6-phosphate isomerase like protein, domain 1"/>
    <property type="match status" value="1"/>
</dbReference>
<dbReference type="Gene3D" id="1.10.287.610">
    <property type="entry name" value="Helix hairpin bin"/>
    <property type="match status" value="1"/>
</dbReference>
<dbReference type="HAMAP" id="MF_00291_B">
    <property type="entry name" value="Ribosomal_uS2_B"/>
    <property type="match status" value="1"/>
</dbReference>
<dbReference type="InterPro" id="IPR001865">
    <property type="entry name" value="Ribosomal_uS2"/>
</dbReference>
<dbReference type="InterPro" id="IPR005706">
    <property type="entry name" value="Ribosomal_uS2_bac/mit/plastid"/>
</dbReference>
<dbReference type="InterPro" id="IPR018130">
    <property type="entry name" value="Ribosomal_uS2_CS"/>
</dbReference>
<dbReference type="InterPro" id="IPR023591">
    <property type="entry name" value="Ribosomal_uS2_flav_dom_sf"/>
</dbReference>
<dbReference type="NCBIfam" id="TIGR01011">
    <property type="entry name" value="rpsB_bact"/>
    <property type="match status" value="1"/>
</dbReference>
<dbReference type="PANTHER" id="PTHR12534">
    <property type="entry name" value="30S RIBOSOMAL PROTEIN S2 PROKARYOTIC AND ORGANELLAR"/>
    <property type="match status" value="1"/>
</dbReference>
<dbReference type="PANTHER" id="PTHR12534:SF0">
    <property type="entry name" value="SMALL RIBOSOMAL SUBUNIT PROTEIN US2M"/>
    <property type="match status" value="1"/>
</dbReference>
<dbReference type="Pfam" id="PF00318">
    <property type="entry name" value="Ribosomal_S2"/>
    <property type="match status" value="1"/>
</dbReference>
<dbReference type="PRINTS" id="PR00395">
    <property type="entry name" value="RIBOSOMALS2"/>
</dbReference>
<dbReference type="SUPFAM" id="SSF52313">
    <property type="entry name" value="Ribosomal protein S2"/>
    <property type="match status" value="1"/>
</dbReference>
<dbReference type="PROSITE" id="PS00962">
    <property type="entry name" value="RIBOSOMAL_S2_1"/>
    <property type="match status" value="1"/>
</dbReference>
<dbReference type="PROSITE" id="PS00963">
    <property type="entry name" value="RIBOSOMAL_S2_2"/>
    <property type="match status" value="1"/>
</dbReference>
<gene>
    <name evidence="1" type="primary">rpsB</name>
    <name type="ordered locus">Spea_2885</name>
</gene>
<feature type="chain" id="PRO_1000078901" description="Small ribosomal subunit protein uS2">
    <location>
        <begin position="1"/>
        <end position="242"/>
    </location>
</feature>
<organism>
    <name type="scientific">Shewanella pealeana (strain ATCC 700345 / ANG-SQ1)</name>
    <dbReference type="NCBI Taxonomy" id="398579"/>
    <lineage>
        <taxon>Bacteria</taxon>
        <taxon>Pseudomonadati</taxon>
        <taxon>Pseudomonadota</taxon>
        <taxon>Gammaproteobacteria</taxon>
        <taxon>Alteromonadales</taxon>
        <taxon>Shewanellaceae</taxon>
        <taxon>Shewanella</taxon>
    </lineage>
</organism>
<accession>A8H6L6</accession>
<protein>
    <recommendedName>
        <fullName evidence="1">Small ribosomal subunit protein uS2</fullName>
    </recommendedName>
    <alternativeName>
        <fullName evidence="2">30S ribosomal protein S2</fullName>
    </alternativeName>
</protein>